<dbReference type="EC" id="4.2.1.9" evidence="1"/>
<dbReference type="EMBL" id="CR931997">
    <property type="protein sequence ID" value="CAI37474.1"/>
    <property type="molecule type" value="Genomic_DNA"/>
</dbReference>
<dbReference type="RefSeq" id="WP_011273796.1">
    <property type="nucleotide sequence ID" value="NC_007164.1"/>
</dbReference>
<dbReference type="SMR" id="Q4JUN3"/>
<dbReference type="STRING" id="306537.jk1303"/>
<dbReference type="KEGG" id="cjk:jk1303"/>
<dbReference type="PATRIC" id="fig|306537.10.peg.1322"/>
<dbReference type="eggNOG" id="COG0129">
    <property type="taxonomic scope" value="Bacteria"/>
</dbReference>
<dbReference type="HOGENOM" id="CLU_014271_4_2_11"/>
<dbReference type="OrthoDB" id="9807077at2"/>
<dbReference type="UniPathway" id="UPA00047">
    <property type="reaction ID" value="UER00057"/>
</dbReference>
<dbReference type="UniPathway" id="UPA00049">
    <property type="reaction ID" value="UER00061"/>
</dbReference>
<dbReference type="Proteomes" id="UP000000545">
    <property type="component" value="Chromosome"/>
</dbReference>
<dbReference type="GO" id="GO:0005829">
    <property type="term" value="C:cytosol"/>
    <property type="evidence" value="ECO:0007669"/>
    <property type="project" value="TreeGrafter"/>
</dbReference>
<dbReference type="GO" id="GO:0051537">
    <property type="term" value="F:2 iron, 2 sulfur cluster binding"/>
    <property type="evidence" value="ECO:0007669"/>
    <property type="project" value="UniProtKB-UniRule"/>
</dbReference>
<dbReference type="GO" id="GO:0004160">
    <property type="term" value="F:dihydroxy-acid dehydratase activity"/>
    <property type="evidence" value="ECO:0007669"/>
    <property type="project" value="UniProtKB-UniRule"/>
</dbReference>
<dbReference type="GO" id="GO:0000287">
    <property type="term" value="F:magnesium ion binding"/>
    <property type="evidence" value="ECO:0007669"/>
    <property type="project" value="UniProtKB-UniRule"/>
</dbReference>
<dbReference type="GO" id="GO:0009097">
    <property type="term" value="P:isoleucine biosynthetic process"/>
    <property type="evidence" value="ECO:0007669"/>
    <property type="project" value="UniProtKB-UniRule"/>
</dbReference>
<dbReference type="GO" id="GO:0009099">
    <property type="term" value="P:L-valine biosynthetic process"/>
    <property type="evidence" value="ECO:0007669"/>
    <property type="project" value="UniProtKB-UniRule"/>
</dbReference>
<dbReference type="FunFam" id="3.50.30.80:FF:000001">
    <property type="entry name" value="Dihydroxy-acid dehydratase"/>
    <property type="match status" value="1"/>
</dbReference>
<dbReference type="Gene3D" id="3.50.30.80">
    <property type="entry name" value="IlvD/EDD C-terminal domain-like"/>
    <property type="match status" value="1"/>
</dbReference>
<dbReference type="HAMAP" id="MF_00012">
    <property type="entry name" value="IlvD"/>
    <property type="match status" value="1"/>
</dbReference>
<dbReference type="InterPro" id="IPR042096">
    <property type="entry name" value="Dihydro-acid_dehy_C"/>
</dbReference>
<dbReference type="InterPro" id="IPR004404">
    <property type="entry name" value="DihydroxyA_deHydtase"/>
</dbReference>
<dbReference type="InterPro" id="IPR020558">
    <property type="entry name" value="DiOHA_6PGluconate_deHydtase_CS"/>
</dbReference>
<dbReference type="InterPro" id="IPR056740">
    <property type="entry name" value="ILV_EDD_C"/>
</dbReference>
<dbReference type="InterPro" id="IPR000581">
    <property type="entry name" value="ILV_EDD_N"/>
</dbReference>
<dbReference type="InterPro" id="IPR037237">
    <property type="entry name" value="IlvD/EDD_N"/>
</dbReference>
<dbReference type="NCBIfam" id="TIGR00110">
    <property type="entry name" value="ilvD"/>
    <property type="match status" value="1"/>
</dbReference>
<dbReference type="NCBIfam" id="NF009103">
    <property type="entry name" value="PRK12448.1"/>
    <property type="match status" value="1"/>
</dbReference>
<dbReference type="PANTHER" id="PTHR43661">
    <property type="entry name" value="D-XYLONATE DEHYDRATASE"/>
    <property type="match status" value="1"/>
</dbReference>
<dbReference type="PANTHER" id="PTHR43661:SF3">
    <property type="entry name" value="D-XYLONATE DEHYDRATASE YAGF-RELATED"/>
    <property type="match status" value="1"/>
</dbReference>
<dbReference type="Pfam" id="PF24877">
    <property type="entry name" value="ILV_EDD_C"/>
    <property type="match status" value="1"/>
</dbReference>
<dbReference type="Pfam" id="PF00920">
    <property type="entry name" value="ILVD_EDD_N"/>
    <property type="match status" value="1"/>
</dbReference>
<dbReference type="SUPFAM" id="SSF143975">
    <property type="entry name" value="IlvD/EDD N-terminal domain-like"/>
    <property type="match status" value="1"/>
</dbReference>
<dbReference type="SUPFAM" id="SSF52016">
    <property type="entry name" value="LeuD/IlvD-like"/>
    <property type="match status" value="1"/>
</dbReference>
<dbReference type="PROSITE" id="PS00886">
    <property type="entry name" value="ILVD_EDD_1"/>
    <property type="match status" value="1"/>
</dbReference>
<dbReference type="PROSITE" id="PS00887">
    <property type="entry name" value="ILVD_EDD_2"/>
    <property type="match status" value="1"/>
</dbReference>
<sequence length="615" mass="65041">MNAIPLRSAVTTQGRNAAGARALWRATGMTDQDFEKPIIAIANSYTQFVPGHVHLKDVGDIVADAIREAGGVPREFNTIAVDDGIAMGHAGMLYSLPSREVISDAVEYMVNGHAADALVCISNCDKITPGMLNAAMRLNIPVVFVSGGPMEAGKAVAVDGVVQAPTDLITAISASASDKVDAQALLEVESAACPTCGSCSGMFTANSMNCLTEALGLSLPGNGSTLATHAKRRDLFTKAGTTIVELCRRYYGEGDASVLPRNIATREAFENAMALDMAMGGSSNTVLHILAAAQEGEIDFDLHSIDQLSREVPCLSKVSPNSDYHMEDVHRGGGIPAILGELYRAGKLNEGVHSVHSATLKEWLLSWDIRSGAATEEAIELFHAAPGGVRTTAPFSTENRWSSLDTDAEGGVIRDVEHAYTADGGLVVLRGNLAEDGAVIKAAGVDPSIWHFEGKALVVESQEEAVRVILDKKVKPGHVVVVRYEGPAGGPGMQEMLHPTAFLKGAGLGKECALITDGRFSGGTSGLSVGHISPEAAHGGLIGLVRDGDPITIDVHERLLQLNISDEEIERRRAEMEASDKPWTPTTRQRKVTKALRAYAAMATSADRGAVREVK</sequence>
<keyword id="KW-0001">2Fe-2S</keyword>
<keyword id="KW-0028">Amino-acid biosynthesis</keyword>
<keyword id="KW-0100">Branched-chain amino acid biosynthesis</keyword>
<keyword id="KW-0408">Iron</keyword>
<keyword id="KW-0411">Iron-sulfur</keyword>
<keyword id="KW-0456">Lyase</keyword>
<keyword id="KW-0460">Magnesium</keyword>
<keyword id="KW-0479">Metal-binding</keyword>
<keyword id="KW-1185">Reference proteome</keyword>
<organism>
    <name type="scientific">Corynebacterium jeikeium (strain K411)</name>
    <dbReference type="NCBI Taxonomy" id="306537"/>
    <lineage>
        <taxon>Bacteria</taxon>
        <taxon>Bacillati</taxon>
        <taxon>Actinomycetota</taxon>
        <taxon>Actinomycetes</taxon>
        <taxon>Mycobacteriales</taxon>
        <taxon>Corynebacteriaceae</taxon>
        <taxon>Corynebacterium</taxon>
    </lineage>
</organism>
<reference key="1">
    <citation type="journal article" date="2005" name="J. Bacteriol.">
        <title>Complete genome sequence and analysis of the multiresistant nosocomial pathogen Corynebacterium jeikeium K411, a lipid-requiring bacterium of the human skin flora.</title>
        <authorList>
            <person name="Tauch A."/>
            <person name="Kaiser O."/>
            <person name="Hain T."/>
            <person name="Goesmann A."/>
            <person name="Weisshaar B."/>
            <person name="Albersmeier A."/>
            <person name="Bekel T."/>
            <person name="Bischoff N."/>
            <person name="Brune I."/>
            <person name="Chakraborty T."/>
            <person name="Kalinowski J."/>
            <person name="Meyer F."/>
            <person name="Rupp O."/>
            <person name="Schneiker S."/>
            <person name="Viehoever P."/>
            <person name="Puehler A."/>
        </authorList>
    </citation>
    <scope>NUCLEOTIDE SEQUENCE [LARGE SCALE GENOMIC DNA]</scope>
    <source>
        <strain>K411</strain>
    </source>
</reference>
<protein>
    <recommendedName>
        <fullName evidence="1">Dihydroxy-acid dehydratase</fullName>
        <shortName evidence="1">DAD</shortName>
        <ecNumber evidence="1">4.2.1.9</ecNumber>
    </recommendedName>
</protein>
<comment type="function">
    <text evidence="1">Functions in the biosynthesis of branched-chain amino acids. Catalyzes the dehydration of (2R,3R)-2,3-dihydroxy-3-methylpentanoate (2,3-dihydroxy-3-methylvalerate) into 2-oxo-3-methylpentanoate (2-oxo-3-methylvalerate) and of (2R)-2,3-dihydroxy-3-methylbutanoate (2,3-dihydroxyisovalerate) into 2-oxo-3-methylbutanoate (2-oxoisovalerate), the penultimate precursor to L-isoleucine and L-valine, respectively.</text>
</comment>
<comment type="catalytic activity">
    <reaction evidence="1">
        <text>(2R)-2,3-dihydroxy-3-methylbutanoate = 3-methyl-2-oxobutanoate + H2O</text>
        <dbReference type="Rhea" id="RHEA:24809"/>
        <dbReference type="ChEBI" id="CHEBI:11851"/>
        <dbReference type="ChEBI" id="CHEBI:15377"/>
        <dbReference type="ChEBI" id="CHEBI:49072"/>
        <dbReference type="EC" id="4.2.1.9"/>
    </reaction>
    <physiologicalReaction direction="left-to-right" evidence="1">
        <dbReference type="Rhea" id="RHEA:24810"/>
    </physiologicalReaction>
</comment>
<comment type="catalytic activity">
    <reaction evidence="1">
        <text>(2R,3R)-2,3-dihydroxy-3-methylpentanoate = (S)-3-methyl-2-oxopentanoate + H2O</text>
        <dbReference type="Rhea" id="RHEA:27694"/>
        <dbReference type="ChEBI" id="CHEBI:15377"/>
        <dbReference type="ChEBI" id="CHEBI:35146"/>
        <dbReference type="ChEBI" id="CHEBI:49258"/>
        <dbReference type="EC" id="4.2.1.9"/>
    </reaction>
    <physiologicalReaction direction="left-to-right" evidence="1">
        <dbReference type="Rhea" id="RHEA:27695"/>
    </physiologicalReaction>
</comment>
<comment type="cofactor">
    <cofactor evidence="1">
        <name>[2Fe-2S] cluster</name>
        <dbReference type="ChEBI" id="CHEBI:190135"/>
    </cofactor>
    <text evidence="1">Binds 1 [2Fe-2S] cluster per subunit. This cluster acts as a Lewis acid cofactor.</text>
</comment>
<comment type="cofactor">
    <cofactor evidence="1">
        <name>Mg(2+)</name>
        <dbReference type="ChEBI" id="CHEBI:18420"/>
    </cofactor>
</comment>
<comment type="pathway">
    <text evidence="1">Amino-acid biosynthesis; L-isoleucine biosynthesis; L-isoleucine from 2-oxobutanoate: step 3/4.</text>
</comment>
<comment type="pathway">
    <text evidence="1">Amino-acid biosynthesis; L-valine biosynthesis; L-valine from pyruvate: step 3/4.</text>
</comment>
<comment type="subunit">
    <text evidence="1">Homodimer.</text>
</comment>
<comment type="similarity">
    <text evidence="1">Belongs to the IlvD/Edd family.</text>
</comment>
<proteinExistence type="inferred from homology"/>
<feature type="chain" id="PRO_0000225385" description="Dihydroxy-acid dehydratase">
    <location>
        <begin position="1"/>
        <end position="615"/>
    </location>
</feature>
<feature type="active site" description="Proton acceptor" evidence="1">
    <location>
        <position position="521"/>
    </location>
</feature>
<feature type="binding site" evidence="1">
    <location>
        <position position="83"/>
    </location>
    <ligand>
        <name>Mg(2+)</name>
        <dbReference type="ChEBI" id="CHEBI:18420"/>
    </ligand>
</feature>
<feature type="binding site" evidence="1">
    <location>
        <position position="124"/>
    </location>
    <ligand>
        <name>[2Fe-2S] cluster</name>
        <dbReference type="ChEBI" id="CHEBI:190135"/>
    </ligand>
</feature>
<feature type="binding site" evidence="1">
    <location>
        <position position="125"/>
    </location>
    <ligand>
        <name>Mg(2+)</name>
        <dbReference type="ChEBI" id="CHEBI:18420"/>
    </ligand>
</feature>
<feature type="binding site" description="via carbamate group" evidence="1">
    <location>
        <position position="126"/>
    </location>
    <ligand>
        <name>Mg(2+)</name>
        <dbReference type="ChEBI" id="CHEBI:18420"/>
    </ligand>
</feature>
<feature type="binding site" evidence="1">
    <location>
        <position position="199"/>
    </location>
    <ligand>
        <name>[2Fe-2S] cluster</name>
        <dbReference type="ChEBI" id="CHEBI:190135"/>
    </ligand>
</feature>
<feature type="binding site" evidence="1">
    <location>
        <position position="495"/>
    </location>
    <ligand>
        <name>Mg(2+)</name>
        <dbReference type="ChEBI" id="CHEBI:18420"/>
    </ligand>
</feature>
<feature type="modified residue" description="N6-carboxylysine" evidence="1">
    <location>
        <position position="126"/>
    </location>
</feature>
<name>ILVD_CORJK</name>
<accession>Q4JUN3</accession>
<evidence type="ECO:0000255" key="1">
    <source>
        <dbReference type="HAMAP-Rule" id="MF_00012"/>
    </source>
</evidence>
<gene>
    <name evidence="1" type="primary">ilvD</name>
    <name type="ordered locus">jk1303</name>
</gene>